<keyword id="KW-0007">Acetylation</keyword>
<keyword id="KW-0274">FAD</keyword>
<keyword id="KW-0285">Flavoprotein</keyword>
<keyword id="KW-0560">Oxidoreductase</keyword>
<keyword id="KW-0576">Peroxisome</keyword>
<keyword id="KW-1267">Proteomics identification</keyword>
<keyword id="KW-1185">Reference proteome</keyword>
<organism>
    <name type="scientific">Homo sapiens</name>
    <name type="common">Human</name>
    <dbReference type="NCBI Taxonomy" id="9606"/>
    <lineage>
        <taxon>Eukaryota</taxon>
        <taxon>Metazoa</taxon>
        <taxon>Chordata</taxon>
        <taxon>Craniata</taxon>
        <taxon>Vertebrata</taxon>
        <taxon>Euteleostomi</taxon>
        <taxon>Mammalia</taxon>
        <taxon>Eutheria</taxon>
        <taxon>Euarchontoglires</taxon>
        <taxon>Primates</taxon>
        <taxon>Haplorrhini</taxon>
        <taxon>Catarrhini</taxon>
        <taxon>Hominidae</taxon>
        <taxon>Homo</taxon>
    </lineage>
</organism>
<accession>Q9P0Z9</accession>
<accession>B3KNH0</accession>
<accession>P79371</accession>
<accession>Q96H28</accession>
<accession>Q9C070</accession>
<evidence type="ECO:0000250" key="1"/>
<evidence type="ECO:0000250" key="2">
    <source>
        <dbReference type="UniProtKB" id="Q9D826"/>
    </source>
</evidence>
<evidence type="ECO:0000255" key="3"/>
<evidence type="ECO:0000269" key="4">
    <source>
    </source>
</evidence>
<evidence type="ECO:0000305" key="5"/>
<dbReference type="EC" id="1.5.3.1" evidence="4"/>
<dbReference type="EC" id="1.5.3.7" evidence="4"/>
<dbReference type="EMBL" id="U82267">
    <property type="protein sequence ID" value="AAB48443.1"/>
    <property type="molecule type" value="mRNA"/>
</dbReference>
<dbReference type="EMBL" id="AF134593">
    <property type="protein sequence ID" value="AAF37331.1"/>
    <property type="molecule type" value="mRNA"/>
</dbReference>
<dbReference type="EMBL" id="AF136970">
    <property type="protein sequence ID" value="AAG49431.1"/>
    <property type="molecule type" value="mRNA"/>
</dbReference>
<dbReference type="EMBL" id="AK027498">
    <property type="protein sequence ID" value="BAG51332.1"/>
    <property type="molecule type" value="mRNA"/>
</dbReference>
<dbReference type="EMBL" id="CH471159">
    <property type="protein sequence ID" value="EAW51169.1"/>
    <property type="molecule type" value="Genomic_DNA"/>
</dbReference>
<dbReference type="EMBL" id="BC008960">
    <property type="protein sequence ID" value="AAH08960.1"/>
    <property type="molecule type" value="mRNA"/>
</dbReference>
<dbReference type="CCDS" id="CCDS11248.1"/>
<dbReference type="PIR" id="JC7256">
    <property type="entry name" value="JC7256"/>
</dbReference>
<dbReference type="RefSeq" id="NP_057602.2">
    <property type="nucleotide sequence ID" value="NM_016518.3"/>
</dbReference>
<dbReference type="SMR" id="Q9P0Z9"/>
<dbReference type="BioGRID" id="119422">
    <property type="interactions" value="16"/>
</dbReference>
<dbReference type="FunCoup" id="Q9P0Z9">
    <property type="interactions" value="362"/>
</dbReference>
<dbReference type="IntAct" id="Q9P0Z9">
    <property type="interactions" value="11"/>
</dbReference>
<dbReference type="STRING" id="9606.ENSP00000317721"/>
<dbReference type="BindingDB" id="Q9P0Z9"/>
<dbReference type="ChEMBL" id="CHEMBL2254"/>
<dbReference type="DrugBank" id="DB00145">
    <property type="generic name" value="Glycine"/>
</dbReference>
<dbReference type="iPTMnet" id="Q9P0Z9"/>
<dbReference type="PhosphoSitePlus" id="Q9P0Z9"/>
<dbReference type="BioMuta" id="PIPOX"/>
<dbReference type="DMDM" id="54042061"/>
<dbReference type="jPOST" id="Q9P0Z9"/>
<dbReference type="MassIVE" id="Q9P0Z9"/>
<dbReference type="PaxDb" id="9606-ENSP00000317721"/>
<dbReference type="PeptideAtlas" id="Q9P0Z9"/>
<dbReference type="ProteomicsDB" id="83626"/>
<dbReference type="Antibodypedia" id="2669">
    <property type="antibodies" value="111 antibodies from 24 providers"/>
</dbReference>
<dbReference type="DNASU" id="51268"/>
<dbReference type="Ensembl" id="ENST00000323372.9">
    <property type="protein sequence ID" value="ENSP00000317721.4"/>
    <property type="gene ID" value="ENSG00000179761.12"/>
</dbReference>
<dbReference type="GeneID" id="51268"/>
<dbReference type="KEGG" id="hsa:51268"/>
<dbReference type="MANE-Select" id="ENST00000323372.9">
    <property type="protein sequence ID" value="ENSP00000317721.4"/>
    <property type="RefSeq nucleotide sequence ID" value="NM_016518.3"/>
    <property type="RefSeq protein sequence ID" value="NP_057602.2"/>
</dbReference>
<dbReference type="UCSC" id="uc002hdr.2">
    <property type="organism name" value="human"/>
</dbReference>
<dbReference type="AGR" id="HGNC:17804"/>
<dbReference type="CTD" id="51268"/>
<dbReference type="DisGeNET" id="51268"/>
<dbReference type="GeneCards" id="PIPOX"/>
<dbReference type="HGNC" id="HGNC:17804">
    <property type="gene designation" value="PIPOX"/>
</dbReference>
<dbReference type="HPA" id="ENSG00000179761">
    <property type="expression patterns" value="Group enriched (kidney, liver)"/>
</dbReference>
<dbReference type="MIM" id="616713">
    <property type="type" value="gene"/>
</dbReference>
<dbReference type="neXtProt" id="NX_Q9P0Z9"/>
<dbReference type="OpenTargets" id="ENSG00000179761"/>
<dbReference type="PharmGKB" id="PA33332"/>
<dbReference type="VEuPathDB" id="HostDB:ENSG00000179761"/>
<dbReference type="eggNOG" id="KOG2820">
    <property type="taxonomic scope" value="Eukaryota"/>
</dbReference>
<dbReference type="GeneTree" id="ENSGT00390000011000"/>
<dbReference type="HOGENOM" id="CLU_007884_2_2_1"/>
<dbReference type="InParanoid" id="Q9P0Z9"/>
<dbReference type="OMA" id="WPMLWAH"/>
<dbReference type="OrthoDB" id="424974at2759"/>
<dbReference type="PAN-GO" id="Q9P0Z9">
    <property type="GO annotations" value="4 GO annotations based on evolutionary models"/>
</dbReference>
<dbReference type="PhylomeDB" id="Q9P0Z9"/>
<dbReference type="TreeFam" id="TF313837"/>
<dbReference type="BRENDA" id="1.5.3.7">
    <property type="organism ID" value="2681"/>
</dbReference>
<dbReference type="PathwayCommons" id="Q9P0Z9"/>
<dbReference type="Reactome" id="R-HSA-71064">
    <property type="pathway name" value="Lysine catabolism"/>
</dbReference>
<dbReference type="Reactome" id="R-HSA-9033241">
    <property type="pathway name" value="Peroxisomal protein import"/>
</dbReference>
<dbReference type="SignaLink" id="Q9P0Z9"/>
<dbReference type="BioGRID-ORCS" id="51268">
    <property type="hits" value="12 hits in 1151 CRISPR screens"/>
</dbReference>
<dbReference type="ChiTaRS" id="PIPOX">
    <property type="organism name" value="human"/>
</dbReference>
<dbReference type="GenomeRNAi" id="51268"/>
<dbReference type="Pharos" id="Q9P0Z9">
    <property type="development level" value="Tbio"/>
</dbReference>
<dbReference type="PRO" id="PR:Q9P0Z9"/>
<dbReference type="Proteomes" id="UP000005640">
    <property type="component" value="Chromosome 17"/>
</dbReference>
<dbReference type="RNAct" id="Q9P0Z9">
    <property type="molecule type" value="protein"/>
</dbReference>
<dbReference type="Bgee" id="ENSG00000179761">
    <property type="expression patterns" value="Expressed in right lobe of liver and 148 other cell types or tissues"/>
</dbReference>
<dbReference type="ExpressionAtlas" id="Q9P0Z9">
    <property type="expression patterns" value="baseline and differential"/>
</dbReference>
<dbReference type="GO" id="GO:0005829">
    <property type="term" value="C:cytosol"/>
    <property type="evidence" value="ECO:0000304"/>
    <property type="project" value="Reactome"/>
</dbReference>
<dbReference type="GO" id="GO:0005782">
    <property type="term" value="C:peroxisomal matrix"/>
    <property type="evidence" value="ECO:0000304"/>
    <property type="project" value="Reactome"/>
</dbReference>
<dbReference type="GO" id="GO:0005777">
    <property type="term" value="C:peroxisome"/>
    <property type="evidence" value="ECO:0000314"/>
    <property type="project" value="UniProtKB"/>
</dbReference>
<dbReference type="GO" id="GO:0050660">
    <property type="term" value="F:flavin adenine dinucleotide binding"/>
    <property type="evidence" value="ECO:0007669"/>
    <property type="project" value="InterPro"/>
</dbReference>
<dbReference type="GO" id="GO:0050031">
    <property type="term" value="F:L-pipecolate oxidase activity"/>
    <property type="evidence" value="ECO:0000314"/>
    <property type="project" value="UniProtKB"/>
</dbReference>
<dbReference type="GO" id="GO:0008115">
    <property type="term" value="F:sarcosine oxidase activity"/>
    <property type="evidence" value="ECO:0000314"/>
    <property type="project" value="UniProtKB"/>
</dbReference>
<dbReference type="GO" id="GO:0033514">
    <property type="term" value="P:L-lysine catabolic process to acetyl-CoA via L-pipecolate"/>
    <property type="evidence" value="ECO:0000314"/>
    <property type="project" value="UniProtKB"/>
</dbReference>
<dbReference type="GO" id="GO:0006554">
    <property type="term" value="P:lysine catabolic process"/>
    <property type="evidence" value="ECO:0000304"/>
    <property type="project" value="Reactome"/>
</dbReference>
<dbReference type="FunFam" id="3.50.50.60:FF:000164">
    <property type="entry name" value="Peroxisomal sarcosine oxidase"/>
    <property type="match status" value="1"/>
</dbReference>
<dbReference type="Gene3D" id="3.30.9.10">
    <property type="entry name" value="D-Amino Acid Oxidase, subunit A, domain 2"/>
    <property type="match status" value="1"/>
</dbReference>
<dbReference type="Gene3D" id="3.50.50.60">
    <property type="entry name" value="FAD/NAD(P)-binding domain"/>
    <property type="match status" value="1"/>
</dbReference>
<dbReference type="InterPro" id="IPR006076">
    <property type="entry name" value="FAD-dep_OxRdtase"/>
</dbReference>
<dbReference type="InterPro" id="IPR036188">
    <property type="entry name" value="FAD/NAD-bd_sf"/>
</dbReference>
<dbReference type="InterPro" id="IPR045170">
    <property type="entry name" value="MTOX"/>
</dbReference>
<dbReference type="NCBIfam" id="NF008425">
    <property type="entry name" value="PRK11259.1"/>
    <property type="match status" value="1"/>
</dbReference>
<dbReference type="NCBIfam" id="TIGR01377">
    <property type="entry name" value="soxA_mon"/>
    <property type="match status" value="1"/>
</dbReference>
<dbReference type="PANTHER" id="PTHR10961">
    <property type="entry name" value="PEROXISOMAL SARCOSINE OXIDASE"/>
    <property type="match status" value="1"/>
</dbReference>
<dbReference type="PANTHER" id="PTHR10961:SF46">
    <property type="entry name" value="PEROXISOMAL SARCOSINE OXIDASE"/>
    <property type="match status" value="1"/>
</dbReference>
<dbReference type="Pfam" id="PF01266">
    <property type="entry name" value="DAO"/>
    <property type="match status" value="1"/>
</dbReference>
<dbReference type="SUPFAM" id="SSF54373">
    <property type="entry name" value="FAD-linked reductases, C-terminal domain"/>
    <property type="match status" value="1"/>
</dbReference>
<dbReference type="SUPFAM" id="SSF51905">
    <property type="entry name" value="FAD/NAD(P)-binding domain"/>
    <property type="match status" value="1"/>
</dbReference>
<gene>
    <name type="primary">PIPOX</name>
    <name type="synonym">LPIPOX</name>
    <name type="synonym">PSO</name>
</gene>
<name>SOX_HUMAN</name>
<feature type="chain" id="PRO_0000213773" description="Peroxisomal sarcosine oxidase">
    <location>
        <begin position="1"/>
        <end position="390"/>
    </location>
</feature>
<feature type="short sequence motif" description="Microbody targeting signal" evidence="3">
    <location>
        <begin position="388"/>
        <end position="390"/>
    </location>
</feature>
<feature type="binding site" evidence="3">
    <location>
        <begin position="9"/>
        <end position="39"/>
    </location>
    <ligand>
        <name>FAD</name>
        <dbReference type="ChEBI" id="CHEBI:57692"/>
    </ligand>
</feature>
<feature type="modified residue" description="N6-acetyllysine" evidence="2">
    <location>
        <position position="126"/>
    </location>
</feature>
<feature type="modified residue" description="S-8alpha-FAD cysteine" evidence="1">
    <location>
        <position position="319"/>
    </location>
</feature>
<feature type="sequence conflict" description="In Ref. 1; AAB48443." evidence="5" ref="1">
    <original>A</original>
    <variation>V</variation>
    <location>
        <position position="23"/>
    </location>
</feature>
<feature type="sequence conflict" description="In Ref. 1; AAB48443." evidence="5" ref="1">
    <original>A</original>
    <variation>V</variation>
    <location>
        <position position="27"/>
    </location>
</feature>
<feature type="sequence conflict" description="In Ref. 4; BAG51332." evidence="5" ref="4">
    <original>PFRISRFPSLGKAHL</original>
    <variation>AFSNQPFPKPGQSPPLTSGQKPPFCAQEPVSQMEKMSQMKGVSLRYHPFLLPRLNPP</variation>
    <location>
        <begin position="376"/>
        <end position="390"/>
    </location>
</feature>
<feature type="sequence conflict" description="In Ref. 3; AAF37331." evidence="5" ref="3">
    <original>G</original>
    <variation>A</variation>
    <location>
        <position position="386"/>
    </location>
</feature>
<sequence length="390" mass="44066">MAAQKDLWDAIVIGAGIQGCFTAYHLAKHRKRILLLEQFFLPHSRGSSHGQSRIIRKAYLEDFYTRMMHECYQIWAQLEHEAGTQLHRQTGLLLLGMKENQELKTIQANLSRQRVEHQCLSSEELKQRFPNIRLPRGEVGLLDNSGGVIYAYKALRALQDAIRQLGGIVRDGEKVVEINPGLLVTVKTTSRSYQAKSLVITAGPWTNQLLRPLGIEMPLQTLRINVCYWREMVPGSYGVSQAFPCFLWLGLCPHHIYGLPTGEYPGLMKVSYHHGNHADPEERDCPTARTDIGDVQILSSFVRDHLPDLKPEPAVIESCMYTNTPDEQFILDRHPKYDNIVIGAGFSGHGFKLAPVVGKILYELSMKLTPSYDLAPFRISRFPSLGKAHL</sequence>
<reference key="1">
    <citation type="journal article" date="1997" name="J. Biol. Chem.">
        <title>Cloning and functional expression of a mammalian gene for a peroxisomal sarcosine oxidase.</title>
        <authorList>
            <person name="Reuber B.E."/>
            <person name="Karl C."/>
            <person name="Reimann S.A."/>
            <person name="Mihalik S.J."/>
            <person name="Dodt G."/>
        </authorList>
    </citation>
    <scope>NUCLEOTIDE SEQUENCE [MRNA]</scope>
    <source>
        <tissue>Liver</tissue>
    </source>
</reference>
<reference key="2">
    <citation type="journal article" date="2000" name="Biochem. Biophys. Res. Commun.">
        <title>Molecular cloning and expression of human L-pipecolate oxidase.</title>
        <authorList>
            <person name="Ijlst L."/>
            <person name="de Kromme I."/>
            <person name="Oostheim W."/>
            <person name="Wanders R.J.A."/>
        </authorList>
    </citation>
    <scope>NUCLEOTIDE SEQUENCE [MRNA]</scope>
</reference>
<reference key="3">
    <citation type="journal article" date="2000" name="Biochem. J.">
        <title>L-pipecolic acid oxidase, a human enzyme essential for the degradation of L-pipecolic acid, is most similar to the monomeric sarcosine oxidases.</title>
        <authorList>
            <person name="Dodt G."/>
            <person name="Kim D.G."/>
            <person name="Reimann S.A."/>
            <person name="Reuber B.E."/>
            <person name="McCabe K."/>
            <person name="Gould S.J."/>
            <person name="Mihalik S.J."/>
        </authorList>
    </citation>
    <scope>NUCLEOTIDE SEQUENCE [MRNA]</scope>
    <scope>TISSUE SPECIFICITY</scope>
    <scope>SUBCELLULAR LOCATION</scope>
    <scope>CATALYTIC ACTIVITY</scope>
    <scope>FUNCTION</scope>
</reference>
<reference key="4">
    <citation type="journal article" date="2000" name="Proc. Natl. Acad. Sci. U.S.A.">
        <title>Gene expression profiling in the human hypothalamus-pituitary-adrenal axis and full-length cDNA cloning.</title>
        <authorList>
            <person name="Hu R.-M."/>
            <person name="Han Z.-G."/>
            <person name="Song H.-D."/>
            <person name="Peng Y.-D."/>
            <person name="Huang Q.-H."/>
            <person name="Ren S.-X."/>
            <person name="Gu Y.-J."/>
            <person name="Huang C.-H."/>
            <person name="Li Y.-B."/>
            <person name="Jiang C.-L."/>
            <person name="Fu G."/>
            <person name="Zhang Q.-H."/>
            <person name="Gu B.-W."/>
            <person name="Dai M."/>
            <person name="Mao Y.-F."/>
            <person name="Gao G.-F."/>
            <person name="Rong R."/>
            <person name="Ye M."/>
            <person name="Zhou J."/>
            <person name="Xu S.-H."/>
            <person name="Gu J."/>
            <person name="Shi J.-X."/>
            <person name="Jin W.-R."/>
            <person name="Zhang C.-K."/>
            <person name="Wu T.-M."/>
            <person name="Huang G.-Y."/>
            <person name="Chen Z."/>
            <person name="Chen M.-D."/>
            <person name="Chen J.-L."/>
        </authorList>
    </citation>
    <scope>NUCLEOTIDE SEQUENCE [LARGE SCALE MRNA]</scope>
    <source>
        <tissue>Adrenal gland</tissue>
    </source>
</reference>
<reference key="5">
    <citation type="journal article" date="2004" name="Nat. Genet.">
        <title>Complete sequencing and characterization of 21,243 full-length human cDNAs.</title>
        <authorList>
            <person name="Ota T."/>
            <person name="Suzuki Y."/>
            <person name="Nishikawa T."/>
            <person name="Otsuki T."/>
            <person name="Sugiyama T."/>
            <person name="Irie R."/>
            <person name="Wakamatsu A."/>
            <person name="Hayashi K."/>
            <person name="Sato H."/>
            <person name="Nagai K."/>
            <person name="Kimura K."/>
            <person name="Makita H."/>
            <person name="Sekine M."/>
            <person name="Obayashi M."/>
            <person name="Nishi T."/>
            <person name="Shibahara T."/>
            <person name="Tanaka T."/>
            <person name="Ishii S."/>
            <person name="Yamamoto J."/>
            <person name="Saito K."/>
            <person name="Kawai Y."/>
            <person name="Isono Y."/>
            <person name="Nakamura Y."/>
            <person name="Nagahari K."/>
            <person name="Murakami K."/>
            <person name="Yasuda T."/>
            <person name="Iwayanagi T."/>
            <person name="Wagatsuma M."/>
            <person name="Shiratori A."/>
            <person name="Sudo H."/>
            <person name="Hosoiri T."/>
            <person name="Kaku Y."/>
            <person name="Kodaira H."/>
            <person name="Kondo H."/>
            <person name="Sugawara M."/>
            <person name="Takahashi M."/>
            <person name="Kanda K."/>
            <person name="Yokoi T."/>
            <person name="Furuya T."/>
            <person name="Kikkawa E."/>
            <person name="Omura Y."/>
            <person name="Abe K."/>
            <person name="Kamihara K."/>
            <person name="Katsuta N."/>
            <person name="Sato K."/>
            <person name="Tanikawa M."/>
            <person name="Yamazaki M."/>
            <person name="Ninomiya K."/>
            <person name="Ishibashi T."/>
            <person name="Yamashita H."/>
            <person name="Murakawa K."/>
            <person name="Fujimori K."/>
            <person name="Tanai H."/>
            <person name="Kimata M."/>
            <person name="Watanabe M."/>
            <person name="Hiraoka S."/>
            <person name="Chiba Y."/>
            <person name="Ishida S."/>
            <person name="Ono Y."/>
            <person name="Takiguchi S."/>
            <person name="Watanabe S."/>
            <person name="Yosida M."/>
            <person name="Hotuta T."/>
            <person name="Kusano J."/>
            <person name="Kanehori K."/>
            <person name="Takahashi-Fujii A."/>
            <person name="Hara H."/>
            <person name="Tanase T.-O."/>
            <person name="Nomura Y."/>
            <person name="Togiya S."/>
            <person name="Komai F."/>
            <person name="Hara R."/>
            <person name="Takeuchi K."/>
            <person name="Arita M."/>
            <person name="Imose N."/>
            <person name="Musashino K."/>
            <person name="Yuuki H."/>
            <person name="Oshima A."/>
            <person name="Sasaki N."/>
            <person name="Aotsuka S."/>
            <person name="Yoshikawa Y."/>
            <person name="Matsunawa H."/>
            <person name="Ichihara T."/>
            <person name="Shiohata N."/>
            <person name="Sano S."/>
            <person name="Moriya S."/>
            <person name="Momiyama H."/>
            <person name="Satoh N."/>
            <person name="Takami S."/>
            <person name="Terashima Y."/>
            <person name="Suzuki O."/>
            <person name="Nakagawa S."/>
            <person name="Senoh A."/>
            <person name="Mizoguchi H."/>
            <person name="Goto Y."/>
            <person name="Shimizu F."/>
            <person name="Wakebe H."/>
            <person name="Hishigaki H."/>
            <person name="Watanabe T."/>
            <person name="Sugiyama A."/>
            <person name="Takemoto M."/>
            <person name="Kawakami B."/>
            <person name="Yamazaki M."/>
            <person name="Watanabe K."/>
            <person name="Kumagai A."/>
            <person name="Itakura S."/>
            <person name="Fukuzumi Y."/>
            <person name="Fujimori Y."/>
            <person name="Komiyama M."/>
            <person name="Tashiro H."/>
            <person name="Tanigami A."/>
            <person name="Fujiwara T."/>
            <person name="Ono T."/>
            <person name="Yamada K."/>
            <person name="Fujii Y."/>
            <person name="Ozaki K."/>
            <person name="Hirao M."/>
            <person name="Ohmori Y."/>
            <person name="Kawabata A."/>
            <person name="Hikiji T."/>
            <person name="Kobatake N."/>
            <person name="Inagaki H."/>
            <person name="Ikema Y."/>
            <person name="Okamoto S."/>
            <person name="Okitani R."/>
            <person name="Kawakami T."/>
            <person name="Noguchi S."/>
            <person name="Itoh T."/>
            <person name="Shigeta K."/>
            <person name="Senba T."/>
            <person name="Matsumura K."/>
            <person name="Nakajima Y."/>
            <person name="Mizuno T."/>
            <person name="Morinaga M."/>
            <person name="Sasaki M."/>
            <person name="Togashi T."/>
            <person name="Oyama M."/>
            <person name="Hata H."/>
            <person name="Watanabe M."/>
            <person name="Komatsu T."/>
            <person name="Mizushima-Sugano J."/>
            <person name="Satoh T."/>
            <person name="Shirai Y."/>
            <person name="Takahashi Y."/>
            <person name="Nakagawa K."/>
            <person name="Okumura K."/>
            <person name="Nagase T."/>
            <person name="Nomura N."/>
            <person name="Kikuchi H."/>
            <person name="Masuho Y."/>
            <person name="Yamashita R."/>
            <person name="Nakai K."/>
            <person name="Yada T."/>
            <person name="Nakamura Y."/>
            <person name="Ohara O."/>
            <person name="Isogai T."/>
            <person name="Sugano S."/>
        </authorList>
    </citation>
    <scope>NUCLEOTIDE SEQUENCE [LARGE SCALE MRNA]</scope>
</reference>
<reference key="6">
    <citation type="submission" date="2005-07" db="EMBL/GenBank/DDBJ databases">
        <authorList>
            <person name="Mural R.J."/>
            <person name="Istrail S."/>
            <person name="Sutton G.G."/>
            <person name="Florea L."/>
            <person name="Halpern A.L."/>
            <person name="Mobarry C.M."/>
            <person name="Lippert R."/>
            <person name="Walenz B."/>
            <person name="Shatkay H."/>
            <person name="Dew I."/>
            <person name="Miller J.R."/>
            <person name="Flanigan M.J."/>
            <person name="Edwards N.J."/>
            <person name="Bolanos R."/>
            <person name="Fasulo D."/>
            <person name="Halldorsson B.V."/>
            <person name="Hannenhalli S."/>
            <person name="Turner R."/>
            <person name="Yooseph S."/>
            <person name="Lu F."/>
            <person name="Nusskern D.R."/>
            <person name="Shue B.C."/>
            <person name="Zheng X.H."/>
            <person name="Zhong F."/>
            <person name="Delcher A.L."/>
            <person name="Huson D.H."/>
            <person name="Kravitz S.A."/>
            <person name="Mouchard L."/>
            <person name="Reinert K."/>
            <person name="Remington K.A."/>
            <person name="Clark A.G."/>
            <person name="Waterman M.S."/>
            <person name="Eichler E.E."/>
            <person name="Adams M.D."/>
            <person name="Hunkapiller M.W."/>
            <person name="Myers E.W."/>
            <person name="Venter J.C."/>
        </authorList>
    </citation>
    <scope>NUCLEOTIDE SEQUENCE [LARGE SCALE GENOMIC DNA]</scope>
</reference>
<reference key="7">
    <citation type="journal article" date="2004" name="Genome Res.">
        <title>The status, quality, and expansion of the NIH full-length cDNA project: the Mammalian Gene Collection (MGC).</title>
        <authorList>
            <consortium name="The MGC Project Team"/>
        </authorList>
    </citation>
    <scope>NUCLEOTIDE SEQUENCE [LARGE SCALE MRNA]</scope>
    <source>
        <tissue>Muscle</tissue>
    </source>
</reference>
<reference key="8">
    <citation type="journal article" date="2011" name="BMC Syst. Biol.">
        <title>Initial characterization of the human central proteome.</title>
        <authorList>
            <person name="Burkard T.R."/>
            <person name="Planyavsky M."/>
            <person name="Kaupe I."/>
            <person name="Breitwieser F.P."/>
            <person name="Buerckstuemmer T."/>
            <person name="Bennett K.L."/>
            <person name="Superti-Furga G."/>
            <person name="Colinge J."/>
        </authorList>
    </citation>
    <scope>IDENTIFICATION BY MASS SPECTROMETRY [LARGE SCALE ANALYSIS]</scope>
</reference>
<reference key="9">
    <citation type="journal article" date="2014" name="J. Proteomics">
        <title>An enzyme assisted RP-RPLC approach for in-depth analysis of human liver phosphoproteome.</title>
        <authorList>
            <person name="Bian Y."/>
            <person name="Song C."/>
            <person name="Cheng K."/>
            <person name="Dong M."/>
            <person name="Wang F."/>
            <person name="Huang J."/>
            <person name="Sun D."/>
            <person name="Wang L."/>
            <person name="Ye M."/>
            <person name="Zou H."/>
        </authorList>
    </citation>
    <scope>IDENTIFICATION BY MASS SPECTROMETRY [LARGE SCALE ANALYSIS]</scope>
    <source>
        <tissue>Liver</tissue>
    </source>
</reference>
<proteinExistence type="evidence at protein level"/>
<comment type="function">
    <text evidence="4">Metabolizes sarcosine and L-pipecolic acid.</text>
</comment>
<comment type="catalytic activity">
    <reaction evidence="4">
        <text>sarcosine + O2 + H2O = formaldehyde + glycine + H2O2</text>
        <dbReference type="Rhea" id="RHEA:13313"/>
        <dbReference type="ChEBI" id="CHEBI:15377"/>
        <dbReference type="ChEBI" id="CHEBI:15379"/>
        <dbReference type="ChEBI" id="CHEBI:16240"/>
        <dbReference type="ChEBI" id="CHEBI:16842"/>
        <dbReference type="ChEBI" id="CHEBI:57305"/>
        <dbReference type="ChEBI" id="CHEBI:57433"/>
        <dbReference type="EC" id="1.5.3.1"/>
    </reaction>
</comment>
<comment type="catalytic activity">
    <reaction evidence="4">
        <text>L-pipecolate + O2 = L-1-piperideine-6-carboxylate + H2O2 + H(+)</text>
        <dbReference type="Rhea" id="RHEA:11992"/>
        <dbReference type="ChEBI" id="CHEBI:15378"/>
        <dbReference type="ChEBI" id="CHEBI:15379"/>
        <dbReference type="ChEBI" id="CHEBI:16240"/>
        <dbReference type="ChEBI" id="CHEBI:58769"/>
        <dbReference type="ChEBI" id="CHEBI:61185"/>
        <dbReference type="EC" id="1.5.3.7"/>
    </reaction>
</comment>
<comment type="cofactor">
    <cofactor>
        <name>FAD</name>
        <dbReference type="ChEBI" id="CHEBI:57692"/>
    </cofactor>
    <text>Binds 1 FAD per subunit.</text>
</comment>
<comment type="interaction">
    <interactant intactId="EBI-725582">
        <id>Q9P0Z9</id>
    </interactant>
    <interactant intactId="EBI-752420">
        <id>Q9NUX5</id>
        <label>POT1</label>
    </interactant>
    <organismsDiffer>false</organismsDiffer>
    <experiments>2</experiments>
</comment>
<comment type="subcellular location">
    <subcellularLocation>
        <location evidence="4">Peroxisome</location>
    </subcellularLocation>
</comment>
<comment type="tissue specificity">
    <text evidence="4">Expressed in the liver and kidney.</text>
</comment>
<comment type="similarity">
    <text evidence="5">Belongs to the MSOX/MTOX family.</text>
</comment>
<comment type="caution">
    <text evidence="5">Was incorrectly described as originating from rabbit in PubMed:9045710.</text>
</comment>
<protein>
    <recommendedName>
        <fullName>Peroxisomal sarcosine oxidase</fullName>
        <shortName>PSO</shortName>
        <ecNumber evidence="4">1.5.3.1</ecNumber>
        <ecNumber evidence="4">1.5.3.7</ecNumber>
    </recommendedName>
    <alternativeName>
        <fullName>L-pipecolate oxidase</fullName>
    </alternativeName>
    <alternativeName>
        <fullName>L-pipecolic acid oxidase</fullName>
    </alternativeName>
</protein>